<organism>
    <name type="scientific">Synechococcus elongatus (strain ATCC 33912 / PCC 7942 / FACHB-805)</name>
    <name type="common">Anacystis nidulans R2</name>
    <dbReference type="NCBI Taxonomy" id="1140"/>
    <lineage>
        <taxon>Bacteria</taxon>
        <taxon>Bacillati</taxon>
        <taxon>Cyanobacteriota</taxon>
        <taxon>Cyanophyceae</taxon>
        <taxon>Synechococcales</taxon>
        <taxon>Synechococcaceae</taxon>
        <taxon>Synechococcus</taxon>
    </lineage>
</organism>
<evidence type="ECO:0000255" key="1">
    <source>
        <dbReference type="HAMAP-Rule" id="MF_00444"/>
    </source>
</evidence>
<reference key="1">
    <citation type="submission" date="2000-03" db="EMBL/GenBank/DDBJ databases">
        <title>Cloning and sequencing of additional proteolytic subunits of the ATP-dependent Clp protease (ClpR and ClpP3)from the cyanobacterium Synechococcus sp. strain PCC 7942.</title>
        <authorList>
            <person name="Schelin J.R."/>
            <person name="Clarke A.K."/>
        </authorList>
    </citation>
    <scope>NUCLEOTIDE SEQUENCE [GENOMIC DNA]</scope>
</reference>
<reference key="2">
    <citation type="submission" date="2005-08" db="EMBL/GenBank/DDBJ databases">
        <title>Complete sequence of chromosome 1 of Synechococcus elongatus PCC 7942.</title>
        <authorList>
            <consortium name="US DOE Joint Genome Institute"/>
            <person name="Copeland A."/>
            <person name="Lucas S."/>
            <person name="Lapidus A."/>
            <person name="Barry K."/>
            <person name="Detter J.C."/>
            <person name="Glavina T."/>
            <person name="Hammon N."/>
            <person name="Israni S."/>
            <person name="Pitluck S."/>
            <person name="Schmutz J."/>
            <person name="Larimer F."/>
            <person name="Land M."/>
            <person name="Kyrpides N."/>
            <person name="Lykidis A."/>
            <person name="Golden S."/>
            <person name="Richardson P."/>
        </authorList>
    </citation>
    <scope>NUCLEOTIDE SEQUENCE [LARGE SCALE GENOMIC DNA]</scope>
    <source>
        <strain>ATCC 33912 / PCC 7942 / FACHB-805</strain>
    </source>
</reference>
<feature type="chain" id="PRO_0000179688" description="ATP-dependent Clp protease proteolytic subunit 3">
    <location>
        <begin position="1"/>
        <end position="199"/>
    </location>
</feature>
<feature type="active site" description="Nucleophile" evidence="1">
    <location>
        <position position="101"/>
    </location>
</feature>
<feature type="active site" evidence="1">
    <location>
        <position position="126"/>
    </location>
</feature>
<sequence length="199" mass="22080">MPIGVPSVPYRLPGSSFERWIDIYNRLAMERIIFLGQEVTDGLANSIVAQLLYLDSEDSSKPIYLYINSPGGSVTAGMAIYDTMQYIKSPVITICLGLAASMGAFLLCAGSKGKRLALPHSRIMIHQPLGGTGRRQASDIEIEAKEILRIKKLLNQIMADRTGQPLEKIEKDTDRDYFMSAEEAREYGLIDQVIAERPV</sequence>
<keyword id="KW-0963">Cytoplasm</keyword>
<keyword id="KW-0378">Hydrolase</keyword>
<keyword id="KW-0645">Protease</keyword>
<keyword id="KW-1185">Reference proteome</keyword>
<keyword id="KW-0720">Serine protease</keyword>
<comment type="function">
    <text evidence="1">Cleaves peptides in various proteins in a process that requires ATP hydrolysis. Has a chymotrypsin-like activity. Plays a major role in the degradation of misfolded proteins.</text>
</comment>
<comment type="catalytic activity">
    <reaction evidence="1">
        <text>Hydrolysis of proteins to small peptides in the presence of ATP and magnesium. alpha-casein is the usual test substrate. In the absence of ATP, only oligopeptides shorter than five residues are hydrolyzed (such as succinyl-Leu-Tyr-|-NHMec, and Leu-Tyr-Leu-|-Tyr-Trp, in which cleavage of the -Tyr-|-Leu- and -Tyr-|-Trp bonds also occurs).</text>
        <dbReference type="EC" id="3.4.21.92"/>
    </reaction>
</comment>
<comment type="subunit">
    <text evidence="1">Fourteen ClpP subunits assemble into 2 heptameric rings which stack back to back to give a disk-like structure with a central cavity, resembling the structure of eukaryotic proteasomes.</text>
</comment>
<comment type="subcellular location">
    <subcellularLocation>
        <location evidence="1">Cytoplasm</location>
    </subcellularLocation>
</comment>
<comment type="similarity">
    <text evidence="1">Belongs to the peptidase S14 family.</text>
</comment>
<dbReference type="EC" id="3.4.21.92" evidence="1"/>
<dbReference type="EMBL" id="AJ132005">
    <property type="protein sequence ID" value="CAB75988.1"/>
    <property type="molecule type" value="Genomic_DNA"/>
</dbReference>
<dbReference type="EMBL" id="CP000100">
    <property type="protein sequence ID" value="ABB58567.1"/>
    <property type="molecule type" value="Genomic_DNA"/>
</dbReference>
<dbReference type="RefSeq" id="WP_011243883.1">
    <property type="nucleotide sequence ID" value="NZ_JACJTX010000001.1"/>
</dbReference>
<dbReference type="SMR" id="Q9L4P3"/>
<dbReference type="STRING" id="1140.Synpcc7942_2537"/>
<dbReference type="MEROPS" id="S14.001"/>
<dbReference type="PaxDb" id="1140-Synpcc7942_2537"/>
<dbReference type="KEGG" id="syf:Synpcc7942_2537"/>
<dbReference type="eggNOG" id="COG0740">
    <property type="taxonomic scope" value="Bacteria"/>
</dbReference>
<dbReference type="HOGENOM" id="CLU_058707_3_2_3"/>
<dbReference type="OrthoDB" id="571524at2"/>
<dbReference type="BioCyc" id="MetaCyc:SYNPCC7942_2537-MONOMER"/>
<dbReference type="BioCyc" id="SYNEL:SYNPCC7942_2537-MONOMER"/>
<dbReference type="BRENDA" id="3.4.21.92">
    <property type="organism ID" value="7781"/>
</dbReference>
<dbReference type="Proteomes" id="UP000889800">
    <property type="component" value="Chromosome"/>
</dbReference>
<dbReference type="GO" id="GO:0005737">
    <property type="term" value="C:cytoplasm"/>
    <property type="evidence" value="ECO:0007669"/>
    <property type="project" value="UniProtKB-SubCell"/>
</dbReference>
<dbReference type="GO" id="GO:0009368">
    <property type="term" value="C:endopeptidase Clp complex"/>
    <property type="evidence" value="ECO:0007669"/>
    <property type="project" value="TreeGrafter"/>
</dbReference>
<dbReference type="GO" id="GO:0004176">
    <property type="term" value="F:ATP-dependent peptidase activity"/>
    <property type="evidence" value="ECO:0007669"/>
    <property type="project" value="InterPro"/>
</dbReference>
<dbReference type="GO" id="GO:0051117">
    <property type="term" value="F:ATPase binding"/>
    <property type="evidence" value="ECO:0007669"/>
    <property type="project" value="TreeGrafter"/>
</dbReference>
<dbReference type="GO" id="GO:0004252">
    <property type="term" value="F:serine-type endopeptidase activity"/>
    <property type="evidence" value="ECO:0007669"/>
    <property type="project" value="UniProtKB-UniRule"/>
</dbReference>
<dbReference type="GO" id="GO:0006515">
    <property type="term" value="P:protein quality control for misfolded or incompletely synthesized proteins"/>
    <property type="evidence" value="ECO:0007669"/>
    <property type="project" value="TreeGrafter"/>
</dbReference>
<dbReference type="CDD" id="cd07017">
    <property type="entry name" value="S14_ClpP_2"/>
    <property type="match status" value="1"/>
</dbReference>
<dbReference type="FunFam" id="3.90.226.10:FF:000001">
    <property type="entry name" value="ATP-dependent Clp protease proteolytic subunit"/>
    <property type="match status" value="1"/>
</dbReference>
<dbReference type="Gene3D" id="3.90.226.10">
    <property type="entry name" value="2-enoyl-CoA Hydratase, Chain A, domain 1"/>
    <property type="match status" value="1"/>
</dbReference>
<dbReference type="HAMAP" id="MF_00444">
    <property type="entry name" value="ClpP"/>
    <property type="match status" value="1"/>
</dbReference>
<dbReference type="InterPro" id="IPR001907">
    <property type="entry name" value="ClpP"/>
</dbReference>
<dbReference type="InterPro" id="IPR029045">
    <property type="entry name" value="ClpP/crotonase-like_dom_sf"/>
</dbReference>
<dbReference type="InterPro" id="IPR023562">
    <property type="entry name" value="ClpP/TepA"/>
</dbReference>
<dbReference type="InterPro" id="IPR033135">
    <property type="entry name" value="ClpP_His_AS"/>
</dbReference>
<dbReference type="InterPro" id="IPR018215">
    <property type="entry name" value="ClpP_Ser_AS"/>
</dbReference>
<dbReference type="NCBIfam" id="NF001368">
    <property type="entry name" value="PRK00277.1"/>
    <property type="match status" value="1"/>
</dbReference>
<dbReference type="NCBIfam" id="NF009205">
    <property type="entry name" value="PRK12553.1"/>
    <property type="match status" value="1"/>
</dbReference>
<dbReference type="PANTHER" id="PTHR10381">
    <property type="entry name" value="ATP-DEPENDENT CLP PROTEASE PROTEOLYTIC SUBUNIT"/>
    <property type="match status" value="1"/>
</dbReference>
<dbReference type="PANTHER" id="PTHR10381:SF70">
    <property type="entry name" value="ATP-DEPENDENT CLP PROTEASE PROTEOLYTIC SUBUNIT"/>
    <property type="match status" value="1"/>
</dbReference>
<dbReference type="Pfam" id="PF00574">
    <property type="entry name" value="CLP_protease"/>
    <property type="match status" value="1"/>
</dbReference>
<dbReference type="PRINTS" id="PR00127">
    <property type="entry name" value="CLPPROTEASEP"/>
</dbReference>
<dbReference type="SUPFAM" id="SSF52096">
    <property type="entry name" value="ClpP/crotonase"/>
    <property type="match status" value="1"/>
</dbReference>
<dbReference type="PROSITE" id="PS00382">
    <property type="entry name" value="CLP_PROTEASE_HIS"/>
    <property type="match status" value="1"/>
</dbReference>
<dbReference type="PROSITE" id="PS00381">
    <property type="entry name" value="CLP_PROTEASE_SER"/>
    <property type="match status" value="1"/>
</dbReference>
<protein>
    <recommendedName>
        <fullName evidence="1">ATP-dependent Clp protease proteolytic subunit 3</fullName>
        <ecNumber evidence="1">3.4.21.92</ecNumber>
    </recommendedName>
    <alternativeName>
        <fullName evidence="1">Endopeptidase Clp 3</fullName>
    </alternativeName>
</protein>
<proteinExistence type="inferred from homology"/>
<accession>Q9L4P3</accession>
<accession>Q31K52</accession>
<gene>
    <name evidence="1" type="primary">clpP3</name>
    <name type="ordered locus">Synpcc7942_2537</name>
</gene>
<name>CLPP3_SYNE7</name>